<organism>
    <name type="scientific">Arabidopsis thaliana</name>
    <name type="common">Mouse-ear cress</name>
    <dbReference type="NCBI Taxonomy" id="3702"/>
    <lineage>
        <taxon>Eukaryota</taxon>
        <taxon>Viridiplantae</taxon>
        <taxon>Streptophyta</taxon>
        <taxon>Embryophyta</taxon>
        <taxon>Tracheophyta</taxon>
        <taxon>Spermatophyta</taxon>
        <taxon>Magnoliopsida</taxon>
        <taxon>eudicotyledons</taxon>
        <taxon>Gunneridae</taxon>
        <taxon>Pentapetalae</taxon>
        <taxon>rosids</taxon>
        <taxon>malvids</taxon>
        <taxon>Brassicales</taxon>
        <taxon>Brassicaceae</taxon>
        <taxon>Camelineae</taxon>
        <taxon>Arabidopsis</taxon>
    </lineage>
</organism>
<sequence>MSSSNACASPSPFPAVTKLHVDSVTFVPSVKSPASSNPLFLGGAGVRGLDIQGKFVIFTVIGVYLEGNAVPSLSVKWKGKTTEELTESIPFFREIVTGAFEKFIKVTMKLPLTGQQYSEKVTENCVAIWKQLGLYTDCEAKAVEKFLEIFKEETFPPGSSILFALSPTGSLTVAFSKDDSIPETGIAVIENKLLAEAVLESIIGKNGVSPGTRLSVAERLSQLMMKNKDEKEVSDHSVEEKLAKEN</sequence>
<name>CFI1_ARATH</name>
<keyword id="KW-0002">3D-structure</keyword>
<keyword id="KW-0284">Flavonoid biosynthesis</keyword>
<keyword id="KW-0413">Isomerase</keyword>
<keyword id="KW-1185">Reference proteome</keyword>
<reference key="1">
    <citation type="journal article" date="1992" name="Plant Cell">
        <title>Effects of ionizing radiation on a plant genome: analysis of two Arabidopsis transparent testa mutations.</title>
        <authorList>
            <person name="Shirley B.W."/>
            <person name="Hanley S."/>
            <person name="Goodman H.M."/>
        </authorList>
    </citation>
    <scope>NUCLEOTIDE SEQUENCE [GENOMIC DNA]</scope>
    <scope>FUNCTION</scope>
    <source>
        <strain>cv. Columbia</strain>
        <strain>cv. Landsberg erecta</strain>
    </source>
</reference>
<reference key="2">
    <citation type="journal article" date="2000" name="Genetics">
        <title>Nucleotide variation at the chalcone isomerase locus in Arabidopsis thaliana.</title>
        <authorList>
            <person name="Kuittinen H."/>
            <person name="Aguade M."/>
        </authorList>
    </citation>
    <scope>NUCLEOTIDE SEQUENCE [GENOMIC DNA]</scope>
    <source>
        <strain>cv. Gr-5</strain>
        <strain>cv. Ita-0</strain>
        <strain>cv. Mh-0</strain>
        <strain>cv. Per-1</strain>
        <strain>cv. Rv-1</strain>
        <strain>cv. Wlp-2</strain>
    </source>
</reference>
<reference key="3">
    <citation type="journal article" date="2002" name="Mol. Biol. Evol.">
        <title>Parallel patterns of sequence variation within and between populations at three loci of Arabidopsis thaliana.</title>
        <authorList>
            <person name="Kuittinen H."/>
            <person name="Salguero D."/>
            <person name="Aguade M."/>
        </authorList>
    </citation>
    <scope>NUCLEOTIDE SEQUENCE [GENOMIC DNA]</scope>
    <source>
        <strain>cv. Gran-10</strain>
        <strain>cv. Gran-2</strain>
        <strain>cv. Gran-3</strain>
        <strain>cv. Gran-4</strain>
        <strain>cv. Gran-5</strain>
        <strain>cv. Gran-6</strain>
        <strain>cv. Gran-7</strain>
        <strain>cv. Gran-8</strain>
        <strain>cv. Gran-9</strain>
        <strain>cv. Lu-2</strain>
        <strain>cv. Lu-3</strain>
        <strain>cv. Lu-4</strain>
        <strain>cv. Lu-5</strain>
        <strain>cv. Lu-6</strain>
        <strain>cv. Lu-7</strain>
        <strain>cv. Lu-8</strain>
        <strain>cv. Rv-10</strain>
        <strain>cv. Rv-2</strain>
        <strain>cv. Rv-3</strain>
        <strain>cv. Rv-4</strain>
        <strain>cv. Rv-5</strain>
        <strain>cv. Rv-6</strain>
        <strain>cv. Rv-7</strain>
        <strain>cv. Rv-8</strain>
        <strain>cv. Rv-9</strain>
        <strain>cv. Tv-10</strain>
        <strain>cv. Tv-2</strain>
        <strain>cv. Tv-3</strain>
        <strain>cv. Tv-4</strain>
        <strain>cv. Tv-5</strain>
        <strain>cv. Tv-6</strain>
        <strain>cv. Tv-7</strain>
        <strain>cv. Tv-8</strain>
        <strain>cv. Tv-9</strain>
        <strain>cv. Wlp-10</strain>
        <strain>cv. Wlp-2</strain>
        <strain>cv. Wlp-3</strain>
        <strain>cv. Wlp-4</strain>
        <strain>cv. Wlp-5</strain>
        <strain>cv. Wlp-6</strain>
        <strain>cv. Wlp-7</strain>
        <strain>cv. Wlp-8</strain>
        <strain>cv. Wlp-9</strain>
    </source>
</reference>
<reference key="4">
    <citation type="journal article" date="2005" name="Plant Mol. Biol.">
        <title>Differential combinatorial interactions of cis-acting elements recognized by R2R3-MYB, BZIP, and BHLH factors control light-responsive and tissue-specific activation of phenylpropanoid biosynthesis genes.</title>
        <authorList>
            <person name="Hartmann U."/>
            <person name="Sagasser M."/>
            <person name="Mehrtens F."/>
            <person name="Stracke R."/>
            <person name="Weisshaar B."/>
        </authorList>
    </citation>
    <scope>NUCLEOTIDE SEQUENCE [MRNA]</scope>
    <scope>TISSUE SPECIFICITY</scope>
    <scope>INDUCTION BY LIGHT</scope>
    <source>
        <strain>cv. Columbia</strain>
    </source>
</reference>
<reference key="5">
    <citation type="journal article" date="2000" name="Nature">
        <title>Sequence and analysis of chromosome 3 of the plant Arabidopsis thaliana.</title>
        <authorList>
            <person name="Salanoubat M."/>
            <person name="Lemcke K."/>
            <person name="Rieger M."/>
            <person name="Ansorge W."/>
            <person name="Unseld M."/>
            <person name="Fartmann B."/>
            <person name="Valle G."/>
            <person name="Bloecker H."/>
            <person name="Perez-Alonso M."/>
            <person name="Obermaier B."/>
            <person name="Delseny M."/>
            <person name="Boutry M."/>
            <person name="Grivell L.A."/>
            <person name="Mache R."/>
            <person name="Puigdomenech P."/>
            <person name="De Simone V."/>
            <person name="Choisne N."/>
            <person name="Artiguenave F."/>
            <person name="Robert C."/>
            <person name="Brottier P."/>
            <person name="Wincker P."/>
            <person name="Cattolico L."/>
            <person name="Weissenbach J."/>
            <person name="Saurin W."/>
            <person name="Quetier F."/>
            <person name="Schaefer M."/>
            <person name="Mueller-Auer S."/>
            <person name="Gabel C."/>
            <person name="Fuchs M."/>
            <person name="Benes V."/>
            <person name="Wurmbach E."/>
            <person name="Drzonek H."/>
            <person name="Erfle H."/>
            <person name="Jordan N."/>
            <person name="Bangert S."/>
            <person name="Wiedelmann R."/>
            <person name="Kranz H."/>
            <person name="Voss H."/>
            <person name="Holland R."/>
            <person name="Brandt P."/>
            <person name="Nyakatura G."/>
            <person name="Vezzi A."/>
            <person name="D'Angelo M."/>
            <person name="Pallavicini A."/>
            <person name="Toppo S."/>
            <person name="Simionati B."/>
            <person name="Conrad A."/>
            <person name="Hornischer K."/>
            <person name="Kauer G."/>
            <person name="Loehnert T.-H."/>
            <person name="Nordsiek G."/>
            <person name="Reichelt J."/>
            <person name="Scharfe M."/>
            <person name="Schoen O."/>
            <person name="Bargues M."/>
            <person name="Terol J."/>
            <person name="Climent J."/>
            <person name="Navarro P."/>
            <person name="Collado C."/>
            <person name="Perez-Perez A."/>
            <person name="Ottenwaelder B."/>
            <person name="Duchemin D."/>
            <person name="Cooke R."/>
            <person name="Laudie M."/>
            <person name="Berger-Llauro C."/>
            <person name="Purnelle B."/>
            <person name="Masuy D."/>
            <person name="de Haan M."/>
            <person name="Maarse A.C."/>
            <person name="Alcaraz J.-P."/>
            <person name="Cottet A."/>
            <person name="Casacuberta E."/>
            <person name="Monfort A."/>
            <person name="Argiriou A."/>
            <person name="Flores M."/>
            <person name="Liguori R."/>
            <person name="Vitale D."/>
            <person name="Mannhaupt G."/>
            <person name="Haase D."/>
            <person name="Schoof H."/>
            <person name="Rudd S."/>
            <person name="Zaccaria P."/>
            <person name="Mewes H.-W."/>
            <person name="Mayer K.F.X."/>
            <person name="Kaul S."/>
            <person name="Town C.D."/>
            <person name="Koo H.L."/>
            <person name="Tallon L.J."/>
            <person name="Jenkins J."/>
            <person name="Rooney T."/>
            <person name="Rizzo M."/>
            <person name="Walts A."/>
            <person name="Utterback T."/>
            <person name="Fujii C.Y."/>
            <person name="Shea T.P."/>
            <person name="Creasy T.H."/>
            <person name="Haas B."/>
            <person name="Maiti R."/>
            <person name="Wu D."/>
            <person name="Peterson J."/>
            <person name="Van Aken S."/>
            <person name="Pai G."/>
            <person name="Militscher J."/>
            <person name="Sellers P."/>
            <person name="Gill J.E."/>
            <person name="Feldblyum T.V."/>
            <person name="Preuss D."/>
            <person name="Lin X."/>
            <person name="Nierman W.C."/>
            <person name="Salzberg S.L."/>
            <person name="White O."/>
            <person name="Venter J.C."/>
            <person name="Fraser C.M."/>
            <person name="Kaneko T."/>
            <person name="Nakamura Y."/>
            <person name="Sato S."/>
            <person name="Kato T."/>
            <person name="Asamizu E."/>
            <person name="Sasamoto S."/>
            <person name="Kimura T."/>
            <person name="Idesawa K."/>
            <person name="Kawashima K."/>
            <person name="Kishida Y."/>
            <person name="Kiyokawa C."/>
            <person name="Kohara M."/>
            <person name="Matsumoto M."/>
            <person name="Matsuno A."/>
            <person name="Muraki A."/>
            <person name="Nakayama S."/>
            <person name="Nakazaki N."/>
            <person name="Shinpo S."/>
            <person name="Takeuchi C."/>
            <person name="Wada T."/>
            <person name="Watanabe A."/>
            <person name="Yamada M."/>
            <person name="Yasuda M."/>
            <person name="Tabata S."/>
        </authorList>
    </citation>
    <scope>NUCLEOTIDE SEQUENCE [LARGE SCALE GENOMIC DNA]</scope>
    <source>
        <strain>cv. Columbia</strain>
    </source>
</reference>
<reference key="6">
    <citation type="journal article" date="2017" name="Plant J.">
        <title>Araport11: a complete reannotation of the Arabidopsis thaliana reference genome.</title>
        <authorList>
            <person name="Cheng C.Y."/>
            <person name="Krishnakumar V."/>
            <person name="Chan A.P."/>
            <person name="Thibaud-Nissen F."/>
            <person name="Schobel S."/>
            <person name="Town C.D."/>
        </authorList>
    </citation>
    <scope>GENOME REANNOTATION</scope>
    <source>
        <strain>cv. Columbia</strain>
    </source>
</reference>
<reference key="7">
    <citation type="journal article" date="2003" name="Science">
        <title>Empirical analysis of transcriptional activity in the Arabidopsis genome.</title>
        <authorList>
            <person name="Yamada K."/>
            <person name="Lim J."/>
            <person name="Dale J.M."/>
            <person name="Chen H."/>
            <person name="Shinn P."/>
            <person name="Palm C.J."/>
            <person name="Southwick A.M."/>
            <person name="Wu H.C."/>
            <person name="Kim C.J."/>
            <person name="Nguyen M."/>
            <person name="Pham P.K."/>
            <person name="Cheuk R.F."/>
            <person name="Karlin-Newmann G."/>
            <person name="Liu S.X."/>
            <person name="Lam B."/>
            <person name="Sakano H."/>
            <person name="Wu T."/>
            <person name="Yu G."/>
            <person name="Miranda M."/>
            <person name="Quach H.L."/>
            <person name="Tripp M."/>
            <person name="Chang C.H."/>
            <person name="Lee J.M."/>
            <person name="Toriumi M.J."/>
            <person name="Chan M.M."/>
            <person name="Tang C.C."/>
            <person name="Onodera C.S."/>
            <person name="Deng J.M."/>
            <person name="Akiyama K."/>
            <person name="Ansari Y."/>
            <person name="Arakawa T."/>
            <person name="Banh J."/>
            <person name="Banno F."/>
            <person name="Bowser L."/>
            <person name="Brooks S.Y."/>
            <person name="Carninci P."/>
            <person name="Chao Q."/>
            <person name="Choy N."/>
            <person name="Enju A."/>
            <person name="Goldsmith A.D."/>
            <person name="Gurjal M."/>
            <person name="Hansen N.F."/>
            <person name="Hayashizaki Y."/>
            <person name="Johnson-Hopson C."/>
            <person name="Hsuan V.W."/>
            <person name="Iida K."/>
            <person name="Karnes M."/>
            <person name="Khan S."/>
            <person name="Koesema E."/>
            <person name="Ishida J."/>
            <person name="Jiang P.X."/>
            <person name="Jones T."/>
            <person name="Kawai J."/>
            <person name="Kamiya A."/>
            <person name="Meyers C."/>
            <person name="Nakajima M."/>
            <person name="Narusaka M."/>
            <person name="Seki M."/>
            <person name="Sakurai T."/>
            <person name="Satou M."/>
            <person name="Tamse R."/>
            <person name="Vaysberg M."/>
            <person name="Wallender E.K."/>
            <person name="Wong C."/>
            <person name="Yamamura Y."/>
            <person name="Yuan S."/>
            <person name="Shinozaki K."/>
            <person name="Davis R.W."/>
            <person name="Theologis A."/>
            <person name="Ecker J.R."/>
        </authorList>
    </citation>
    <scope>NUCLEOTIDE SEQUENCE [LARGE SCALE MRNA]</scope>
    <source>
        <strain>cv. Columbia</strain>
    </source>
</reference>
<reference key="8">
    <citation type="submission" date="2002-03" db="EMBL/GenBank/DDBJ databases">
        <title>Full-length cDNA from Arabidopsis thaliana.</title>
        <authorList>
            <person name="Brover V.V."/>
            <person name="Troukhan M.E."/>
            <person name="Alexandrov N.A."/>
            <person name="Lu Y.-P."/>
            <person name="Flavell R.B."/>
            <person name="Feldmann K.A."/>
        </authorList>
    </citation>
    <scope>NUCLEOTIDE SEQUENCE [LARGE SCALE MRNA]</scope>
</reference>
<reference key="9">
    <citation type="journal article" date="2013" name="Plant Physiol. Biochem.">
        <title>The flavonoid biosynthetic pathway in Arabidopsis: Structural and genetic diversity.</title>
        <authorList>
            <person name="Saito K."/>
            <person name="Yonekura-Sakakibara K."/>
            <person name="Nakabayashi R."/>
            <person name="Higashi Y."/>
            <person name="Yamazaki M."/>
            <person name="Tohge T."/>
            <person name="Fernie A.R."/>
        </authorList>
    </citation>
    <scope>REVIEW</scope>
    <scope>NOMENCLATURE</scope>
</reference>
<reference key="10">
    <citation type="journal article" date="2012" name="Nature">
        <title>Evolution of the chalcone-isomerase fold from fatty-acid binding to stereospecific catalysis.</title>
        <authorList>
            <person name="Ngaki M.N."/>
            <person name="Louie G.V."/>
            <person name="Philippe R.N."/>
            <person name="Manning G."/>
            <person name="Pojer F."/>
            <person name="Bowman M.E."/>
            <person name="Li L."/>
            <person name="Larsen E."/>
            <person name="Wurtele E.S."/>
            <person name="Noel J.P."/>
        </authorList>
    </citation>
    <scope>X-RAY CRYSTALLOGRAPHY (1.55 ANGSTROMS)</scope>
</reference>
<proteinExistence type="evidence at protein level"/>
<gene>
    <name type="primary">CHI1</name>
    <name type="synonym">CFI</name>
    <name type="synonym">TT5</name>
    <name type="ordered locus">At3g55120</name>
    <name type="ORF">T15C9_120</name>
</gene>
<dbReference type="EC" id="5.5.1.6"/>
<dbReference type="EMBL" id="M86358">
    <property type="protein sequence ID" value="AAA32766.1"/>
    <property type="molecule type" value="Genomic_DNA"/>
</dbReference>
<dbReference type="EMBL" id="AJ287299">
    <property type="protein sequence ID" value="CAB94969.1"/>
    <property type="molecule type" value="Genomic_DNA"/>
</dbReference>
<dbReference type="EMBL" id="AJ287300">
    <property type="protein sequence ID" value="CAB94970.1"/>
    <property type="molecule type" value="Genomic_DNA"/>
</dbReference>
<dbReference type="EMBL" id="AJ287301">
    <property type="protein sequence ID" value="CAB94971.1"/>
    <property type="molecule type" value="Genomic_DNA"/>
</dbReference>
<dbReference type="EMBL" id="AJ287302">
    <property type="protein sequence ID" value="CAB94972.1"/>
    <property type="molecule type" value="Genomic_DNA"/>
</dbReference>
<dbReference type="EMBL" id="AJ287303">
    <property type="protein sequence ID" value="CAB94973.1"/>
    <property type="molecule type" value="Genomic_DNA"/>
</dbReference>
<dbReference type="EMBL" id="AJ287304">
    <property type="protein sequence ID" value="CAB94974.1"/>
    <property type="molecule type" value="Genomic_DNA"/>
</dbReference>
<dbReference type="EMBL" id="AJ287305">
    <property type="protein sequence ID" value="CAB94975.1"/>
    <property type="molecule type" value="Genomic_DNA"/>
</dbReference>
<dbReference type="EMBL" id="AJ287306">
    <property type="protein sequence ID" value="CAB94976.1"/>
    <property type="molecule type" value="Genomic_DNA"/>
</dbReference>
<dbReference type="EMBL" id="AJ287307">
    <property type="protein sequence ID" value="CAB94977.1"/>
    <property type="molecule type" value="Genomic_DNA"/>
</dbReference>
<dbReference type="EMBL" id="AJ287308">
    <property type="protein sequence ID" value="CAB94978.1"/>
    <property type="molecule type" value="Genomic_DNA"/>
</dbReference>
<dbReference type="EMBL" id="AJ287309">
    <property type="protein sequence ID" value="CAB94979.1"/>
    <property type="molecule type" value="Genomic_DNA"/>
</dbReference>
<dbReference type="EMBL" id="AJ287310">
    <property type="protein sequence ID" value="CAB94980.1"/>
    <property type="molecule type" value="Genomic_DNA"/>
</dbReference>
<dbReference type="EMBL" id="AJ287311">
    <property type="protein sequence ID" value="CAB94981.1"/>
    <property type="molecule type" value="Genomic_DNA"/>
</dbReference>
<dbReference type="EMBL" id="AJ287312">
    <property type="protein sequence ID" value="CAB94982.1"/>
    <property type="molecule type" value="Genomic_DNA"/>
</dbReference>
<dbReference type="EMBL" id="AJ287313">
    <property type="protein sequence ID" value="CAB94983.1"/>
    <property type="molecule type" value="Genomic_DNA"/>
</dbReference>
<dbReference type="EMBL" id="AJ287314">
    <property type="protein sequence ID" value="CAB94984.1"/>
    <property type="molecule type" value="Genomic_DNA"/>
</dbReference>
<dbReference type="EMBL" id="AJ287315">
    <property type="protein sequence ID" value="CAB94985.1"/>
    <property type="molecule type" value="Genomic_DNA"/>
</dbReference>
<dbReference type="EMBL" id="AJ287316">
    <property type="protein sequence ID" value="CAB94986.1"/>
    <property type="molecule type" value="Genomic_DNA"/>
</dbReference>
<dbReference type="EMBL" id="AJ287317">
    <property type="protein sequence ID" value="CAB94987.1"/>
    <property type="molecule type" value="Genomic_DNA"/>
</dbReference>
<dbReference type="EMBL" id="AJ287318">
    <property type="protein sequence ID" value="CAB94988.1"/>
    <property type="molecule type" value="Genomic_DNA"/>
</dbReference>
<dbReference type="EMBL" id="AJ287319">
    <property type="protein sequence ID" value="CAB94989.1"/>
    <property type="molecule type" value="Genomic_DNA"/>
</dbReference>
<dbReference type="EMBL" id="AJ287320">
    <property type="protein sequence ID" value="CAB94990.1"/>
    <property type="molecule type" value="Genomic_DNA"/>
</dbReference>
<dbReference type="EMBL" id="AJ287321">
    <property type="protein sequence ID" value="CAB94991.1"/>
    <property type="molecule type" value="Genomic_DNA"/>
</dbReference>
<dbReference type="EMBL" id="AJ492461">
    <property type="protein sequence ID" value="CAD42187.1"/>
    <property type="molecule type" value="Genomic_DNA"/>
</dbReference>
<dbReference type="EMBL" id="AJ492462">
    <property type="protein sequence ID" value="CAD42188.1"/>
    <property type="molecule type" value="Genomic_DNA"/>
</dbReference>
<dbReference type="EMBL" id="AJ492463">
    <property type="protein sequence ID" value="CAD42189.1"/>
    <property type="molecule type" value="Genomic_DNA"/>
</dbReference>
<dbReference type="EMBL" id="AJ492464">
    <property type="protein sequence ID" value="CAD42190.1"/>
    <property type="molecule type" value="Genomic_DNA"/>
</dbReference>
<dbReference type="EMBL" id="AJ492465">
    <property type="protein sequence ID" value="CAD42191.1"/>
    <property type="molecule type" value="Genomic_DNA"/>
</dbReference>
<dbReference type="EMBL" id="AJ492466">
    <property type="protein sequence ID" value="CAD42192.1"/>
    <property type="molecule type" value="Genomic_DNA"/>
</dbReference>
<dbReference type="EMBL" id="AJ492467">
    <property type="protein sequence ID" value="CAD42193.1"/>
    <property type="molecule type" value="Genomic_DNA"/>
</dbReference>
<dbReference type="EMBL" id="AJ492468">
    <property type="protein sequence ID" value="CAD42194.1"/>
    <property type="molecule type" value="Genomic_DNA"/>
</dbReference>
<dbReference type="EMBL" id="AJ492469">
    <property type="protein sequence ID" value="CAD42195.1"/>
    <property type="molecule type" value="Genomic_DNA"/>
</dbReference>
<dbReference type="EMBL" id="AJ492470">
    <property type="protein sequence ID" value="CAD42196.1"/>
    <property type="molecule type" value="Genomic_DNA"/>
</dbReference>
<dbReference type="EMBL" id="AJ492471">
    <property type="protein sequence ID" value="CAD42197.1"/>
    <property type="molecule type" value="Genomic_DNA"/>
</dbReference>
<dbReference type="EMBL" id="AJ492472">
    <property type="protein sequence ID" value="CAD42198.1"/>
    <property type="molecule type" value="Genomic_DNA"/>
</dbReference>
<dbReference type="EMBL" id="AJ492473">
    <property type="protein sequence ID" value="CAD42199.1"/>
    <property type="molecule type" value="Genomic_DNA"/>
</dbReference>
<dbReference type="EMBL" id="AJ492474">
    <property type="protein sequence ID" value="CAD42200.1"/>
    <property type="molecule type" value="Genomic_DNA"/>
</dbReference>
<dbReference type="EMBL" id="AJ492475">
    <property type="protein sequence ID" value="CAD42201.1"/>
    <property type="molecule type" value="Genomic_DNA"/>
</dbReference>
<dbReference type="EMBL" id="AJ492476">
    <property type="protein sequence ID" value="CAD42202.1"/>
    <property type="molecule type" value="Genomic_DNA"/>
</dbReference>
<dbReference type="EMBL" id="AJ492477">
    <property type="protein sequence ID" value="CAD42203.1"/>
    <property type="molecule type" value="Genomic_DNA"/>
</dbReference>
<dbReference type="EMBL" id="AJ492478">
    <property type="protein sequence ID" value="CAD42204.1"/>
    <property type="molecule type" value="Genomic_DNA"/>
</dbReference>
<dbReference type="EMBL" id="AJ492479">
    <property type="protein sequence ID" value="CAD42205.1"/>
    <property type="molecule type" value="Genomic_DNA"/>
</dbReference>
<dbReference type="EMBL" id="AJ492480">
    <property type="protein sequence ID" value="CAD42206.1"/>
    <property type="molecule type" value="Genomic_DNA"/>
</dbReference>
<dbReference type="EMBL" id="AJ492481">
    <property type="protein sequence ID" value="CAD42207.1"/>
    <property type="molecule type" value="Genomic_DNA"/>
</dbReference>
<dbReference type="EMBL" id="AJ492482">
    <property type="protein sequence ID" value="CAD42208.1"/>
    <property type="molecule type" value="Genomic_DNA"/>
</dbReference>
<dbReference type="EMBL" id="AJ492483">
    <property type="protein sequence ID" value="CAD42209.1"/>
    <property type="molecule type" value="Genomic_DNA"/>
</dbReference>
<dbReference type="EMBL" id="AJ492484">
    <property type="protein sequence ID" value="CAD42210.1"/>
    <property type="molecule type" value="Genomic_DNA"/>
</dbReference>
<dbReference type="EMBL" id="AJ492485">
    <property type="protein sequence ID" value="CAD42211.1"/>
    <property type="molecule type" value="Genomic_DNA"/>
</dbReference>
<dbReference type="EMBL" id="AJ492486">
    <property type="protein sequence ID" value="CAD42212.1"/>
    <property type="molecule type" value="Genomic_DNA"/>
</dbReference>
<dbReference type="EMBL" id="AJ492487">
    <property type="protein sequence ID" value="CAD42213.1"/>
    <property type="molecule type" value="Genomic_DNA"/>
</dbReference>
<dbReference type="EMBL" id="AJ492488">
    <property type="protein sequence ID" value="CAD42214.1"/>
    <property type="molecule type" value="Genomic_DNA"/>
</dbReference>
<dbReference type="EMBL" id="AJ492489">
    <property type="protein sequence ID" value="CAD42215.1"/>
    <property type="molecule type" value="Genomic_DNA"/>
</dbReference>
<dbReference type="EMBL" id="AJ492490">
    <property type="protein sequence ID" value="CAD42216.1"/>
    <property type="molecule type" value="Genomic_DNA"/>
</dbReference>
<dbReference type="EMBL" id="AJ492491">
    <property type="protein sequence ID" value="CAD42217.1"/>
    <property type="molecule type" value="Genomic_DNA"/>
</dbReference>
<dbReference type="EMBL" id="AJ492492">
    <property type="protein sequence ID" value="CAD42218.1"/>
    <property type="molecule type" value="Genomic_DNA"/>
</dbReference>
<dbReference type="EMBL" id="AJ492493">
    <property type="protein sequence ID" value="CAD42219.1"/>
    <property type="molecule type" value="Genomic_DNA"/>
</dbReference>
<dbReference type="EMBL" id="AJ492494">
    <property type="protein sequence ID" value="CAD42220.1"/>
    <property type="molecule type" value="Genomic_DNA"/>
</dbReference>
<dbReference type="EMBL" id="AJ492495">
    <property type="protein sequence ID" value="CAD42221.1"/>
    <property type="molecule type" value="Genomic_DNA"/>
</dbReference>
<dbReference type="EMBL" id="AJ492496">
    <property type="protein sequence ID" value="CAD42222.1"/>
    <property type="molecule type" value="Genomic_DNA"/>
</dbReference>
<dbReference type="EMBL" id="AJ492497">
    <property type="protein sequence ID" value="CAD42223.1"/>
    <property type="molecule type" value="Genomic_DNA"/>
</dbReference>
<dbReference type="EMBL" id="AJ492498">
    <property type="protein sequence ID" value="CAD42224.1"/>
    <property type="molecule type" value="Genomic_DNA"/>
</dbReference>
<dbReference type="EMBL" id="AJ492499">
    <property type="protein sequence ID" value="CAD42225.1"/>
    <property type="molecule type" value="Genomic_DNA"/>
</dbReference>
<dbReference type="EMBL" id="AJ492500">
    <property type="protein sequence ID" value="CAD42226.1"/>
    <property type="molecule type" value="Genomic_DNA"/>
</dbReference>
<dbReference type="EMBL" id="AJ492501">
    <property type="protein sequence ID" value="CAD42227.1"/>
    <property type="molecule type" value="Genomic_DNA"/>
</dbReference>
<dbReference type="EMBL" id="AJ492502">
    <property type="protein sequence ID" value="CAD42228.1"/>
    <property type="molecule type" value="Genomic_DNA"/>
</dbReference>
<dbReference type="EMBL" id="AJ492503">
    <property type="protein sequence ID" value="CAD42229.1"/>
    <property type="molecule type" value="Genomic_DNA"/>
</dbReference>
<dbReference type="EMBL" id="AJ418046">
    <property type="protein sequence ID" value="CAD10782.1"/>
    <property type="molecule type" value="mRNA"/>
</dbReference>
<dbReference type="EMBL" id="AF439537">
    <property type="protein sequence ID" value="AAL35225.1"/>
    <property type="molecule type" value="Genomic_DNA"/>
</dbReference>
<dbReference type="EMBL" id="AL132970">
    <property type="protein sequence ID" value="CAB82707.2"/>
    <property type="molecule type" value="Genomic_DNA"/>
</dbReference>
<dbReference type="EMBL" id="CP002686">
    <property type="protein sequence ID" value="AEE79342.1"/>
    <property type="molecule type" value="Genomic_DNA"/>
</dbReference>
<dbReference type="EMBL" id="BT004265">
    <property type="protein sequence ID" value="AAO42267.1"/>
    <property type="molecule type" value="mRNA"/>
</dbReference>
<dbReference type="EMBL" id="BT005528">
    <property type="protein sequence ID" value="AAO63948.1"/>
    <property type="molecule type" value="mRNA"/>
</dbReference>
<dbReference type="EMBL" id="AY086088">
    <property type="protein sequence ID" value="AAM63295.1"/>
    <property type="molecule type" value="mRNA"/>
</dbReference>
<dbReference type="PIR" id="JQ1687">
    <property type="entry name" value="JQ1687"/>
</dbReference>
<dbReference type="PIR" id="T47651">
    <property type="entry name" value="T47651"/>
</dbReference>
<dbReference type="RefSeq" id="NP_191072.1">
    <property type="nucleotide sequence ID" value="NM_115370.4"/>
</dbReference>
<dbReference type="PDB" id="4DOI">
    <property type="method" value="X-ray"/>
    <property type="resolution" value="1.55 A"/>
    <property type="chains" value="A/B=1-246"/>
</dbReference>
<dbReference type="PDBsum" id="4DOI"/>
<dbReference type="SMR" id="P41088"/>
<dbReference type="BioGRID" id="9994">
    <property type="interactions" value="3"/>
</dbReference>
<dbReference type="FunCoup" id="P41088">
    <property type="interactions" value="671"/>
</dbReference>
<dbReference type="IntAct" id="P41088">
    <property type="interactions" value="3"/>
</dbReference>
<dbReference type="STRING" id="3702.P41088"/>
<dbReference type="iPTMnet" id="P41088"/>
<dbReference type="PaxDb" id="3702-AT3G55120.1"/>
<dbReference type="ProteomicsDB" id="224457"/>
<dbReference type="EnsemblPlants" id="AT3G55120.1">
    <property type="protein sequence ID" value="AT3G55120.1"/>
    <property type="gene ID" value="AT3G55120"/>
</dbReference>
<dbReference type="GeneID" id="824678"/>
<dbReference type="Gramene" id="AT3G55120.1">
    <property type="protein sequence ID" value="AT3G55120.1"/>
    <property type="gene ID" value="AT3G55120"/>
</dbReference>
<dbReference type="KEGG" id="ath:AT3G55120"/>
<dbReference type="Araport" id="AT3G55120"/>
<dbReference type="TAIR" id="AT3G55120">
    <property type="gene designation" value="TT5"/>
</dbReference>
<dbReference type="eggNOG" id="ENOG502QR5P">
    <property type="taxonomic scope" value="Eukaryota"/>
</dbReference>
<dbReference type="HOGENOM" id="CLU_074682_0_0_1"/>
<dbReference type="InParanoid" id="P41088"/>
<dbReference type="OMA" id="CGADSEK"/>
<dbReference type="OrthoDB" id="1903537at2759"/>
<dbReference type="PhylomeDB" id="P41088"/>
<dbReference type="BioCyc" id="ARA:AT3G55120-MONOMER"/>
<dbReference type="UniPathway" id="UPA00154"/>
<dbReference type="EvolutionaryTrace" id="P41088"/>
<dbReference type="PRO" id="PR:P41088"/>
<dbReference type="Proteomes" id="UP000006548">
    <property type="component" value="Chromosome 3"/>
</dbReference>
<dbReference type="ExpressionAtlas" id="P41088">
    <property type="expression patterns" value="baseline and differential"/>
</dbReference>
<dbReference type="GO" id="GO:0009507">
    <property type="term" value="C:chloroplast"/>
    <property type="evidence" value="ECO:0007005"/>
    <property type="project" value="TAIR"/>
</dbReference>
<dbReference type="GO" id="GO:0005829">
    <property type="term" value="C:cytosol"/>
    <property type="evidence" value="ECO:0007005"/>
    <property type="project" value="TAIR"/>
</dbReference>
<dbReference type="GO" id="GO:0005783">
    <property type="term" value="C:endoplasmic reticulum"/>
    <property type="evidence" value="ECO:0000314"/>
    <property type="project" value="TAIR"/>
</dbReference>
<dbReference type="GO" id="GO:0042406">
    <property type="term" value="C:extrinsic component of endoplasmic reticulum membrane"/>
    <property type="evidence" value="ECO:0000314"/>
    <property type="project" value="TAIR"/>
</dbReference>
<dbReference type="GO" id="GO:0005634">
    <property type="term" value="C:nucleus"/>
    <property type="evidence" value="ECO:0000314"/>
    <property type="project" value="TAIR"/>
</dbReference>
<dbReference type="GO" id="GO:0009705">
    <property type="term" value="C:plant-type vacuole membrane"/>
    <property type="evidence" value="ECO:0000314"/>
    <property type="project" value="TAIR"/>
</dbReference>
<dbReference type="GO" id="GO:0045430">
    <property type="term" value="F:chalcone isomerase activity"/>
    <property type="evidence" value="ECO:0007669"/>
    <property type="project" value="UniProtKB-EC"/>
</dbReference>
<dbReference type="GO" id="GO:0009813">
    <property type="term" value="P:flavonoid biosynthetic process"/>
    <property type="evidence" value="ECO:0000315"/>
    <property type="project" value="TAIR"/>
</dbReference>
<dbReference type="GO" id="GO:0009733">
    <property type="term" value="P:response to auxin"/>
    <property type="evidence" value="ECO:0000270"/>
    <property type="project" value="TAIR"/>
</dbReference>
<dbReference type="GO" id="GO:0009411">
    <property type="term" value="P:response to UV"/>
    <property type="evidence" value="ECO:0000315"/>
    <property type="project" value="TAIR"/>
</dbReference>
<dbReference type="GO" id="GO:0010224">
    <property type="term" value="P:response to UV-B"/>
    <property type="evidence" value="ECO:0000315"/>
    <property type="project" value="TAIR"/>
</dbReference>
<dbReference type="Gene3D" id="1.10.890.20">
    <property type="match status" value="1"/>
</dbReference>
<dbReference type="Gene3D" id="3.50.70.10">
    <property type="match status" value="2"/>
</dbReference>
<dbReference type="InterPro" id="IPR044164">
    <property type="entry name" value="CFI"/>
</dbReference>
<dbReference type="InterPro" id="IPR016087">
    <property type="entry name" value="Chalcone_isomerase"/>
</dbReference>
<dbReference type="InterPro" id="IPR016088">
    <property type="entry name" value="Chalcone_isomerase_3-sand"/>
</dbReference>
<dbReference type="InterPro" id="IPR016089">
    <property type="entry name" value="Chalcone_isomerase_bundle_sf"/>
</dbReference>
<dbReference type="InterPro" id="IPR036298">
    <property type="entry name" value="Chalcone_isomerase_sf"/>
</dbReference>
<dbReference type="PANTHER" id="PTHR28039:SF8">
    <property type="entry name" value="CHALCONE--FLAVANONE ISOMERASE 1-RELATED"/>
    <property type="match status" value="1"/>
</dbReference>
<dbReference type="PANTHER" id="PTHR28039">
    <property type="entry name" value="CHALCONE--FLAVONONE ISOMERASE 1-RELATED"/>
    <property type="match status" value="1"/>
</dbReference>
<dbReference type="Pfam" id="PF02431">
    <property type="entry name" value="Chalcone"/>
    <property type="match status" value="1"/>
</dbReference>
<dbReference type="SUPFAM" id="SSF54626">
    <property type="entry name" value="Chalcone isomerase"/>
    <property type="match status" value="1"/>
</dbReference>
<evidence type="ECO:0000250" key="1"/>
<evidence type="ECO:0000269" key="2">
    <source>
    </source>
</evidence>
<evidence type="ECO:0000269" key="3">
    <source>
    </source>
</evidence>
<evidence type="ECO:0000305" key="4"/>
<evidence type="ECO:0007829" key="5">
    <source>
        <dbReference type="PDB" id="4DOI"/>
    </source>
</evidence>
<accession>P41088</accession>
<accession>Q8W532</accession>
<accession>Q9LE13</accession>
<accession>Q9LF74</accession>
<accession>Q9LF75</accession>
<feature type="chain" id="PRO_0000166428" description="Chalcone--flavanone isomerase 1">
    <location>
        <begin position="1"/>
        <end position="246"/>
    </location>
</feature>
<feature type="binding site" evidence="1">
    <location>
        <position position="59"/>
    </location>
    <ligand>
        <name>substrate</name>
    </ligand>
</feature>
<feature type="binding site" evidence="1">
    <location>
        <position position="124"/>
    </location>
    <ligand>
        <name>substrate</name>
    </ligand>
</feature>
<feature type="binding site" evidence="1">
    <location>
        <position position="201"/>
    </location>
    <ligand>
        <name>substrate</name>
    </ligand>
</feature>
<feature type="site" description="Important for catalytic activity" evidence="1">
    <location>
        <position position="117"/>
    </location>
</feature>
<feature type="sequence variant" description="In strain: cv. Cha-0.">
    <original>I</original>
    <variation>V</variation>
    <location>
        <position position="202"/>
    </location>
</feature>
<feature type="sequence variant" description="In strain: cv. Gr-5, cv. Gran-2, cv. Gran-3, cv. Gran-5, cv. Gran-7, cv. Gran-8, cv. Gran-10, cv. Ita-0, cv. Ler, cv. Mh-0, cv. Per-1, cv. Rv-1, cv. Rv-3, cv. Rv-4, cv. Rv-5, cv. Rv-8, cv. Wlp-1, cv. Wlp-2, cv. Wlp-3, cv. Wlp-4, cv. Wlp-5, cv. Wlp-6, cv. Wlp-7, cv. Wlp-8, cv. Wlp-9 and cv. Wlp-10.">
    <original>V</original>
    <variation>L</variation>
    <location>
        <position position="238"/>
    </location>
</feature>
<feature type="sequence variant" description="In strain: cv. Rv-2, cv. Rv-9, cv. Rv-10, cv. Tv-1, cv. Tv-2, cv. TV-6, cv. Tv-7, cv. Tv-8, cv. Tv-9 and cv. Tv-10.">
    <original>N</original>
    <variation>NRE</variation>
    <location>
        <position position="246"/>
    </location>
</feature>
<feature type="strand" evidence="5">
    <location>
        <begin position="19"/>
        <end position="21"/>
    </location>
</feature>
<feature type="strand" evidence="5">
    <location>
        <begin position="24"/>
        <end position="26"/>
    </location>
</feature>
<feature type="strand" evidence="5">
    <location>
        <begin position="28"/>
        <end position="31"/>
    </location>
</feature>
<feature type="turn" evidence="5">
    <location>
        <begin position="33"/>
        <end position="35"/>
    </location>
</feature>
<feature type="strand" evidence="5">
    <location>
        <begin position="38"/>
        <end position="51"/>
    </location>
</feature>
<feature type="strand" evidence="5">
    <location>
        <begin position="54"/>
        <end position="65"/>
    </location>
</feature>
<feature type="helix" evidence="5">
    <location>
        <begin position="69"/>
        <end position="77"/>
    </location>
</feature>
<feature type="helix" evidence="5">
    <location>
        <begin position="82"/>
        <end position="87"/>
    </location>
</feature>
<feature type="helix" evidence="5">
    <location>
        <begin position="89"/>
        <end position="97"/>
    </location>
</feature>
<feature type="strand" evidence="5">
    <location>
        <begin position="102"/>
        <end position="110"/>
    </location>
</feature>
<feature type="helix" evidence="5">
    <location>
        <begin position="114"/>
        <end position="121"/>
    </location>
</feature>
<feature type="turn" evidence="5">
    <location>
        <begin position="122"/>
        <end position="124"/>
    </location>
</feature>
<feature type="helix" evidence="5">
    <location>
        <begin position="125"/>
        <end position="131"/>
    </location>
</feature>
<feature type="helix" evidence="5">
    <location>
        <begin position="137"/>
        <end position="150"/>
    </location>
</feature>
<feature type="strand" evidence="5">
    <location>
        <begin position="160"/>
        <end position="165"/>
    </location>
</feature>
<feature type="strand" evidence="5">
    <location>
        <begin position="169"/>
        <end position="179"/>
    </location>
</feature>
<feature type="strand" evidence="5">
    <location>
        <begin position="186"/>
        <end position="190"/>
    </location>
</feature>
<feature type="helix" evidence="5">
    <location>
        <begin position="192"/>
        <end position="203"/>
    </location>
</feature>
<feature type="helix" evidence="5">
    <location>
        <begin position="210"/>
        <end position="224"/>
    </location>
</feature>
<feature type="helix" evidence="5">
    <location>
        <begin position="227"/>
        <end position="230"/>
    </location>
</feature>
<comment type="function">
    <text evidence="2">Catalyzes the intramolecular cyclization of bicyclic chalcones into tricyclic (S)-flavanones. Responsible for the isomerization of 4,2',4',6'-tetrahydroxychalcone (also termed chalcone) into naringenin.</text>
</comment>
<comment type="catalytic activity">
    <reaction>
        <text>a chalcone = a flavanone.</text>
        <dbReference type="EC" id="5.5.1.6"/>
    </reaction>
</comment>
<comment type="pathway">
    <text>Secondary metabolite biosynthesis; flavonoid biosynthesis.</text>
</comment>
<comment type="interaction">
    <interactant intactId="EBI-1546761">
        <id>P41088</id>
    </interactant>
    <interactant intactId="EBI-1546775">
        <id>P13114</id>
        <label>CHS</label>
    </interactant>
    <organismsDiffer>false</organismsDiffer>
    <experiments>4</experiments>
</comment>
<comment type="tissue specificity">
    <text evidence="3">Mostly expressed in siliques and flowers, and, to a lower extent, in leaves.</text>
</comment>
<comment type="induction">
    <text evidence="3">By light.</text>
</comment>
<comment type="miscellaneous">
    <text>Part of the biosynthetic pathway for all classes of flavonoids, a large class of secondary plant metabolites, many of which are brightly colored.</text>
</comment>
<comment type="similarity">
    <text evidence="4">Belongs to the chalcone isomerase family.</text>
</comment>
<protein>
    <recommendedName>
        <fullName>Chalcone--flavanone isomerase 1</fullName>
        <shortName>Chalcone isomerase 1</shortName>
        <ecNumber>5.5.1.6</ecNumber>
    </recommendedName>
    <alternativeName>
        <fullName>Protein TRANSPARENT TESTA 5</fullName>
    </alternativeName>
</protein>